<comment type="function">
    <text evidence="3 4">Confers resistance to the antitumor agent cisplatin. Binds preferentially to sites of DNA modified by cisplatin in vitro. Binds to double-stranded DNA in a cooperative manner resulting in the formation of filament-like structures. Binds to single-stranded DNA with no cooperativity. Binds to RNA.</text>
</comment>
<comment type="subunit">
    <text evidence="4">Homodimer.</text>
</comment>
<comment type="subcellular location">
    <subcellularLocation>
        <location>Nucleus</location>
    </subcellularLocation>
    <subcellularLocation>
        <location>Cytoplasm</location>
    </subcellularLocation>
    <subcellularLocation>
        <location evidence="1">Nucleus</location>
        <location evidence="1">Nucleolus</location>
    </subcellularLocation>
</comment>
<organism>
    <name type="scientific">Gallus gallus</name>
    <name type="common">Chicken</name>
    <dbReference type="NCBI Taxonomy" id="9031"/>
    <lineage>
        <taxon>Eukaryota</taxon>
        <taxon>Metazoa</taxon>
        <taxon>Chordata</taxon>
        <taxon>Craniata</taxon>
        <taxon>Vertebrata</taxon>
        <taxon>Euteleostomi</taxon>
        <taxon>Archelosauria</taxon>
        <taxon>Archosauria</taxon>
        <taxon>Dinosauria</taxon>
        <taxon>Saurischia</taxon>
        <taxon>Theropoda</taxon>
        <taxon>Coelurosauria</taxon>
        <taxon>Aves</taxon>
        <taxon>Neognathae</taxon>
        <taxon>Galloanserae</taxon>
        <taxon>Galliformes</taxon>
        <taxon>Phasianidae</taxon>
        <taxon>Phasianinae</taxon>
        <taxon>Gallus</taxon>
    </lineage>
</organism>
<evidence type="ECO:0000250" key="1"/>
<evidence type="ECO:0000255" key="2">
    <source>
        <dbReference type="PROSITE-ProRule" id="PRU00176"/>
    </source>
</evidence>
<evidence type="ECO:0000269" key="3">
    <source>
    </source>
</evidence>
<evidence type="ECO:0000269" key="4">
    <source>
    </source>
</evidence>
<evidence type="ECO:0000305" key="5"/>
<accession>Q8JFQ4</accession>
<accession>Q2L4W7</accession>
<keyword id="KW-0963">Cytoplasm</keyword>
<keyword id="KW-0238">DNA-binding</keyword>
<keyword id="KW-0539">Nucleus</keyword>
<keyword id="KW-1185">Reference proteome</keyword>
<keyword id="KW-0694">RNA-binding</keyword>
<name>RDM1_CHICK</name>
<sequence length="277" mass="30268">MAEVLEFRVPAGSAQTLLVWGLEPTVGLEHSLFSVFSKFGLLYSVRVHSNAAVAGPGCYAIIKFYSAADASRAQHACNGQRLFQNSPLKVCVCTKQKGFQQQVLALNSNKCQELANHYLGFNGWSSRIITLQNVSGFDDENEEVGKKRSVRYLCAVEVTLPNHGVRTRGVGLGEADVESGEDPLEFGTATRRVQKLAVGKALSSAFQKILLVVLESGKVAVEYNHAAEEPTDSLTEEELEGLVQVSELPLEPFDLEEEVLSDLTLDDELPVWEVPSN</sequence>
<gene>
    <name type="primary">RDM1</name>
</gene>
<feature type="chain" id="PRO_0000299531" description="RAD52 motif-containing protein 1">
    <location>
        <begin position="1"/>
        <end position="277"/>
    </location>
</feature>
<feature type="domain" description="RRM" evidence="2">
    <location>
        <begin position="15"/>
        <end position="95"/>
    </location>
</feature>
<feature type="mutagenesis site" description="Inhibits partially single-stranded DNA-binding activity but not homodimerization." evidence="4">
    <original>LGF</original>
    <variation>AAA</variation>
    <location>
        <begin position="119"/>
        <end position="121"/>
    </location>
</feature>
<feature type="sequence conflict" description="In Ref. 2; BAE78658." evidence="5" ref="2">
    <original>E</original>
    <variation>K</variation>
    <location>
        <position position="29"/>
    </location>
</feature>
<feature type="sequence conflict" description="In Ref. 2; BAE78658." evidence="5" ref="2">
    <original>P</original>
    <variation>A</variation>
    <location>
        <position position="87"/>
    </location>
</feature>
<feature type="sequence conflict" description="In Ref. 2; BAE78658." evidence="5" ref="2">
    <original>G</original>
    <variation>V</variation>
    <location>
        <position position="187"/>
    </location>
</feature>
<proteinExistence type="evidence at protein level"/>
<protein>
    <recommendedName>
        <fullName>RAD52 motif-containing protein 1</fullName>
    </recommendedName>
</protein>
<reference key="1">
    <citation type="journal article" date="2005" name="J. Biol. Chem.">
        <title>RDM1, a novel RNA recognition motif (RRM)-containing protein involved in the cell response to cisplatin in vertebrates.</title>
        <authorList>
            <person name="Hamimes S."/>
            <person name="Arakawa H."/>
            <person name="Stasiak A.Z."/>
            <person name="Kierzek A.M."/>
            <person name="Hirano S."/>
            <person name="Yang Y.-G."/>
            <person name="Takata M."/>
            <person name="Stasiak A."/>
            <person name="Buerstedde J.M."/>
            <person name="Van Dyck E."/>
        </authorList>
    </citation>
    <scope>NUCLEOTIDE SEQUENCE [MRNA]</scope>
    <scope>FUNCTION</scope>
    <scope>RNA-BINDING</scope>
    <scope>DNA-BINDING</scope>
    <source>
        <tissue>Bursa of Fabricius</tissue>
    </source>
</reference>
<reference key="2">
    <citation type="journal article" date="2006" name="Nucleic Acids Res.">
        <title>Activation of the chicken Ig-beta locus by the collaboration of scattered regulatory regions through changes in chromatin structure.</title>
        <authorList>
            <person name="Shimada N."/>
            <person name="Matsudo H."/>
            <person name="Osano K."/>
            <person name="Arakawa H."/>
            <person name="Buerstedde J.-M."/>
            <person name="Matsumoto Y."/>
            <person name="Chayahara K."/>
            <person name="Torihata A."/>
            <person name="Ono M."/>
        </authorList>
    </citation>
    <scope>NUCLEOTIDE SEQUENCE [GENOMIC DNA]</scope>
    <source>
        <tissue>Liver</tissue>
    </source>
</reference>
<reference key="3">
    <citation type="journal article" date="2006" name="Biochem. Biophys. Res. Commun.">
        <title>Nucleic acid-binding properties of the RRM-containing protein RDM1.</title>
        <authorList>
            <person name="Hamimes S."/>
            <person name="Bourgeon D."/>
            <person name="Stasiak A.Z."/>
            <person name="Stasiak A."/>
            <person name="Van Dyck E."/>
        </authorList>
    </citation>
    <scope>FUNCTION</scope>
    <scope>SUBUNIT</scope>
    <scope>MUTAGENESIS OF 119-LEU--PHE-121</scope>
    <scope>RNA-BINDING</scope>
    <scope>DNA-BINDING</scope>
</reference>
<dbReference type="EMBL" id="AB080727">
    <property type="protein sequence ID" value="BAC02561.1"/>
    <property type="molecule type" value="mRNA"/>
</dbReference>
<dbReference type="EMBL" id="AB248100">
    <property type="protein sequence ID" value="BAE78658.1"/>
    <property type="molecule type" value="Genomic_DNA"/>
</dbReference>
<dbReference type="RefSeq" id="NP_989877.2">
    <property type="nucleotide sequence ID" value="NM_204546.2"/>
</dbReference>
<dbReference type="SMR" id="Q8JFQ4"/>
<dbReference type="FunCoup" id="Q8JFQ4">
    <property type="interactions" value="184"/>
</dbReference>
<dbReference type="STRING" id="9031.ENSGALP00000000321"/>
<dbReference type="PaxDb" id="9031-ENSGALP00000000321"/>
<dbReference type="GeneID" id="395228"/>
<dbReference type="KEGG" id="gga:395228"/>
<dbReference type="CTD" id="201299"/>
<dbReference type="VEuPathDB" id="HostDB:geneid_395228"/>
<dbReference type="eggNOG" id="ENOG502RXM9">
    <property type="taxonomic scope" value="Eukaryota"/>
</dbReference>
<dbReference type="InParanoid" id="Q8JFQ4"/>
<dbReference type="OrthoDB" id="6287754at2759"/>
<dbReference type="PhylomeDB" id="Q8JFQ4"/>
<dbReference type="PRO" id="PR:Q8JFQ4"/>
<dbReference type="Proteomes" id="UP000000539">
    <property type="component" value="Unassembled WGS sequence"/>
</dbReference>
<dbReference type="GO" id="GO:0005737">
    <property type="term" value="C:cytoplasm"/>
    <property type="evidence" value="ECO:0007669"/>
    <property type="project" value="UniProtKB-SubCell"/>
</dbReference>
<dbReference type="GO" id="GO:0005730">
    <property type="term" value="C:nucleolus"/>
    <property type="evidence" value="ECO:0000318"/>
    <property type="project" value="GO_Central"/>
</dbReference>
<dbReference type="GO" id="GO:0003677">
    <property type="term" value="F:DNA binding"/>
    <property type="evidence" value="ECO:0007669"/>
    <property type="project" value="UniProtKB-KW"/>
</dbReference>
<dbReference type="GO" id="GO:0003723">
    <property type="term" value="F:RNA binding"/>
    <property type="evidence" value="ECO:0007669"/>
    <property type="project" value="UniProtKB-KW"/>
</dbReference>
<dbReference type="GO" id="GO:0006310">
    <property type="term" value="P:DNA recombination"/>
    <property type="evidence" value="ECO:0007669"/>
    <property type="project" value="UniProtKB-ARBA"/>
</dbReference>
<dbReference type="GO" id="GO:0006302">
    <property type="term" value="P:double-strand break repair"/>
    <property type="evidence" value="ECO:0007669"/>
    <property type="project" value="UniProtKB-ARBA"/>
</dbReference>
<dbReference type="CDD" id="cd12364">
    <property type="entry name" value="RRM_RDM1"/>
    <property type="match status" value="1"/>
</dbReference>
<dbReference type="FunFam" id="3.30.390.80:FF:000002">
    <property type="entry name" value="RAD52 motif containing 1"/>
    <property type="match status" value="1"/>
</dbReference>
<dbReference type="Gene3D" id="3.30.70.330">
    <property type="match status" value="1"/>
</dbReference>
<dbReference type="Gene3D" id="3.30.390.80">
    <property type="entry name" value="DNA repair protein Rad52/59/22"/>
    <property type="match status" value="1"/>
</dbReference>
<dbReference type="InterPro" id="IPR012677">
    <property type="entry name" value="Nucleotide-bd_a/b_plait_sf"/>
</dbReference>
<dbReference type="InterPro" id="IPR041247">
    <property type="entry name" value="Rad52_fam"/>
</dbReference>
<dbReference type="InterPro" id="IPR042525">
    <property type="entry name" value="Rad52_Rad59_Rad22_sf"/>
</dbReference>
<dbReference type="InterPro" id="IPR035979">
    <property type="entry name" value="RBD_domain_sf"/>
</dbReference>
<dbReference type="InterPro" id="IPR040224">
    <property type="entry name" value="RDM1"/>
</dbReference>
<dbReference type="InterPro" id="IPR034200">
    <property type="entry name" value="RDM1_RRM"/>
</dbReference>
<dbReference type="InterPro" id="IPR000504">
    <property type="entry name" value="RRM_dom"/>
</dbReference>
<dbReference type="PANTHER" id="PTHR31164">
    <property type="entry name" value="RAD52 MOTIF-CONTAINING PROTEIN 1"/>
    <property type="match status" value="1"/>
</dbReference>
<dbReference type="PANTHER" id="PTHR31164:SF1">
    <property type="entry name" value="RAD52 MOTIF-CONTAINING PROTEIN 1"/>
    <property type="match status" value="1"/>
</dbReference>
<dbReference type="Pfam" id="PF04098">
    <property type="entry name" value="Rad52_Rad22"/>
    <property type="match status" value="1"/>
</dbReference>
<dbReference type="Pfam" id="PF00076">
    <property type="entry name" value="RRM_1"/>
    <property type="match status" value="1"/>
</dbReference>
<dbReference type="SMART" id="SM00360">
    <property type="entry name" value="RRM"/>
    <property type="match status" value="1"/>
</dbReference>
<dbReference type="SUPFAM" id="SSF54768">
    <property type="entry name" value="dsRNA-binding domain-like"/>
    <property type="match status" value="1"/>
</dbReference>
<dbReference type="SUPFAM" id="SSF54928">
    <property type="entry name" value="RNA-binding domain, RBD"/>
    <property type="match status" value="1"/>
</dbReference>
<dbReference type="PROSITE" id="PS50102">
    <property type="entry name" value="RRM"/>
    <property type="match status" value="1"/>
</dbReference>